<name>CYB_GLYMU</name>
<dbReference type="EMBL" id="AF258875">
    <property type="protein sequence ID" value="AAL74311.1"/>
    <property type="molecule type" value="Genomic_DNA"/>
</dbReference>
<dbReference type="SMR" id="Q8SJK5"/>
<dbReference type="GO" id="GO:0005743">
    <property type="term" value="C:mitochondrial inner membrane"/>
    <property type="evidence" value="ECO:0007669"/>
    <property type="project" value="UniProtKB-SubCell"/>
</dbReference>
<dbReference type="GO" id="GO:0045275">
    <property type="term" value="C:respiratory chain complex III"/>
    <property type="evidence" value="ECO:0007669"/>
    <property type="project" value="InterPro"/>
</dbReference>
<dbReference type="GO" id="GO:0046872">
    <property type="term" value="F:metal ion binding"/>
    <property type="evidence" value="ECO:0007669"/>
    <property type="project" value="UniProtKB-KW"/>
</dbReference>
<dbReference type="GO" id="GO:0008121">
    <property type="term" value="F:ubiquinol-cytochrome-c reductase activity"/>
    <property type="evidence" value="ECO:0007669"/>
    <property type="project" value="InterPro"/>
</dbReference>
<dbReference type="GO" id="GO:0006122">
    <property type="term" value="P:mitochondrial electron transport, ubiquinol to cytochrome c"/>
    <property type="evidence" value="ECO:0007669"/>
    <property type="project" value="TreeGrafter"/>
</dbReference>
<dbReference type="CDD" id="cd00290">
    <property type="entry name" value="cytochrome_b_C"/>
    <property type="match status" value="1"/>
</dbReference>
<dbReference type="CDD" id="cd00284">
    <property type="entry name" value="Cytochrome_b_N"/>
    <property type="match status" value="1"/>
</dbReference>
<dbReference type="FunFam" id="1.20.810.10:FF:000002">
    <property type="entry name" value="Cytochrome b"/>
    <property type="match status" value="1"/>
</dbReference>
<dbReference type="Gene3D" id="1.20.810.10">
    <property type="entry name" value="Cytochrome Bc1 Complex, Chain C"/>
    <property type="match status" value="1"/>
</dbReference>
<dbReference type="InterPro" id="IPR005798">
    <property type="entry name" value="Cyt_b/b6_C"/>
</dbReference>
<dbReference type="InterPro" id="IPR036150">
    <property type="entry name" value="Cyt_b/b6_C_sf"/>
</dbReference>
<dbReference type="InterPro" id="IPR005797">
    <property type="entry name" value="Cyt_b/b6_N"/>
</dbReference>
<dbReference type="InterPro" id="IPR027387">
    <property type="entry name" value="Cytb/b6-like_sf"/>
</dbReference>
<dbReference type="InterPro" id="IPR030689">
    <property type="entry name" value="Cytochrome_b"/>
</dbReference>
<dbReference type="InterPro" id="IPR048260">
    <property type="entry name" value="Cytochrome_b_C_euk/bac"/>
</dbReference>
<dbReference type="InterPro" id="IPR048259">
    <property type="entry name" value="Cytochrome_b_N_euk/bac"/>
</dbReference>
<dbReference type="InterPro" id="IPR016174">
    <property type="entry name" value="Di-haem_cyt_TM"/>
</dbReference>
<dbReference type="PANTHER" id="PTHR19271">
    <property type="entry name" value="CYTOCHROME B"/>
    <property type="match status" value="1"/>
</dbReference>
<dbReference type="PANTHER" id="PTHR19271:SF16">
    <property type="entry name" value="CYTOCHROME B"/>
    <property type="match status" value="1"/>
</dbReference>
<dbReference type="Pfam" id="PF00032">
    <property type="entry name" value="Cytochrom_B_C"/>
    <property type="match status" value="1"/>
</dbReference>
<dbReference type="Pfam" id="PF00033">
    <property type="entry name" value="Cytochrome_B"/>
    <property type="match status" value="1"/>
</dbReference>
<dbReference type="PIRSF" id="PIRSF038885">
    <property type="entry name" value="COB"/>
    <property type="match status" value="1"/>
</dbReference>
<dbReference type="SUPFAM" id="SSF81648">
    <property type="entry name" value="a domain/subunit of cytochrome bc1 complex (Ubiquinol-cytochrome c reductase)"/>
    <property type="match status" value="1"/>
</dbReference>
<dbReference type="SUPFAM" id="SSF81342">
    <property type="entry name" value="Transmembrane di-heme cytochromes"/>
    <property type="match status" value="1"/>
</dbReference>
<dbReference type="PROSITE" id="PS51003">
    <property type="entry name" value="CYTB_CTER"/>
    <property type="match status" value="1"/>
</dbReference>
<dbReference type="PROSITE" id="PS51002">
    <property type="entry name" value="CYTB_NTER"/>
    <property type="match status" value="1"/>
</dbReference>
<geneLocation type="mitochondrion"/>
<accession>Q8SJK5</accession>
<comment type="function">
    <text evidence="2">Component of the ubiquinol-cytochrome c reductase complex (complex III or cytochrome b-c1 complex) that is part of the mitochondrial respiratory chain. The b-c1 complex mediates electron transfer from ubiquinol to cytochrome c. Contributes to the generation of a proton gradient across the mitochondrial membrane that is then used for ATP synthesis.</text>
</comment>
<comment type="cofactor">
    <cofactor evidence="2">
        <name>heme b</name>
        <dbReference type="ChEBI" id="CHEBI:60344"/>
    </cofactor>
    <text evidence="2">Binds 2 heme b groups non-covalently.</text>
</comment>
<comment type="subunit">
    <text evidence="2">The cytochrome bc1 complex contains 3 respiratory subunits (MT-CYB, CYC1 and UQCRFS1), 2 core proteins (UQCRC1 and UQCRC2) and probably 6 low-molecular weight proteins.</text>
</comment>
<comment type="subcellular location">
    <subcellularLocation>
        <location evidence="2">Mitochondrion inner membrane</location>
        <topology evidence="2">Multi-pass membrane protein</topology>
    </subcellularLocation>
</comment>
<comment type="miscellaneous">
    <text evidence="1">Heme 1 (or BL or b562) is low-potential and absorbs at about 562 nm, and heme 2 (or BH or b566) is high-potential and absorbs at about 566 nm.</text>
</comment>
<comment type="similarity">
    <text evidence="3 4">Belongs to the cytochrome b family.</text>
</comment>
<comment type="caution">
    <text evidence="2">The full-length protein contains only eight transmembrane helices, not nine as predicted by bioinformatics tools.</text>
</comment>
<reference key="1">
    <citation type="journal article" date="2002" name="Mol. Phylogenet. Evol.">
        <title>Molecular phylogenetics of emydine turtles: taxonomic revision and the evolution of shell kinesis.</title>
        <authorList>
            <person name="Feldman C.R."/>
            <person name="Parham J.F."/>
        </authorList>
    </citation>
    <scope>NUCLEOTIDE SEQUENCE [GENOMIC DNA]</scope>
</reference>
<organism>
    <name type="scientific">Glyptemys muhlenbergii</name>
    <name type="common">Bog turtle</name>
    <name type="synonym">Clemmys muhlenbergii</name>
    <dbReference type="NCBI Taxonomy" id="335393"/>
    <lineage>
        <taxon>Eukaryota</taxon>
        <taxon>Metazoa</taxon>
        <taxon>Chordata</taxon>
        <taxon>Craniata</taxon>
        <taxon>Vertebrata</taxon>
        <taxon>Euteleostomi</taxon>
        <taxon>Archelosauria</taxon>
        <taxon>Testudinata</taxon>
        <taxon>Testudines</taxon>
        <taxon>Cryptodira</taxon>
        <taxon>Durocryptodira</taxon>
        <taxon>Testudinoidea</taxon>
        <taxon>Emydidae</taxon>
        <taxon>Glyptemys</taxon>
    </lineage>
</organism>
<keyword id="KW-0249">Electron transport</keyword>
<keyword id="KW-0349">Heme</keyword>
<keyword id="KW-0408">Iron</keyword>
<keyword id="KW-0472">Membrane</keyword>
<keyword id="KW-0479">Metal-binding</keyword>
<keyword id="KW-0496">Mitochondrion</keyword>
<keyword id="KW-0999">Mitochondrion inner membrane</keyword>
<keyword id="KW-0679">Respiratory chain</keyword>
<keyword id="KW-0812">Transmembrane</keyword>
<keyword id="KW-1133">Transmembrane helix</keyword>
<keyword id="KW-0813">Transport</keyword>
<keyword id="KW-0830">Ubiquinone</keyword>
<gene>
    <name type="primary">MT-CYB</name>
    <name type="synonym">COB</name>
    <name type="synonym">CYTB</name>
    <name type="synonym">MTCYB</name>
</gene>
<sequence>MSTNLRKTHPLVKIINNSFIDLPSPSNISAWWNFGSLLGACLILQTITGIFLAMHYSPDISLAFSSVAHITRDVQYGWLIRNMHANGASLFFMCIYLHIGRGLYYGSYLYKETWNTGITLLLLTMATAFVGYVLPWGQMSFWGATVITNLLSAVPYIGNTLVQWIWGGFSVDNATLTRFFTFHFLLPFTIMGMTMVHLLFLHETGSNNPTGLNSNTDKIPFHPYFSYKDLLGLILMLAFLLTLTLFYPNLLGDPDNFTPANPLSTPPHIKPEWYFLFAYAILRSIPNKLGGVLALLLSILVLFLMPTLHTSKQRTIQFRPLTQTLFWSFIANLMVLTWIGGQPVENPFITIGQVASILHFLILLILMPIAGVIENKMLT</sequence>
<protein>
    <recommendedName>
        <fullName>Cytochrome b</fullName>
    </recommendedName>
    <alternativeName>
        <fullName>Complex III subunit 3</fullName>
    </alternativeName>
    <alternativeName>
        <fullName>Complex III subunit III</fullName>
    </alternativeName>
    <alternativeName>
        <fullName>Cytochrome b-c1 complex subunit 3</fullName>
    </alternativeName>
    <alternativeName>
        <fullName>Ubiquinol-cytochrome-c reductase complex cytochrome b subunit</fullName>
    </alternativeName>
</protein>
<proteinExistence type="inferred from homology"/>
<evidence type="ECO:0000250" key="1"/>
<evidence type="ECO:0000250" key="2">
    <source>
        <dbReference type="UniProtKB" id="P00157"/>
    </source>
</evidence>
<evidence type="ECO:0000255" key="3">
    <source>
        <dbReference type="PROSITE-ProRule" id="PRU00967"/>
    </source>
</evidence>
<evidence type="ECO:0000255" key="4">
    <source>
        <dbReference type="PROSITE-ProRule" id="PRU00968"/>
    </source>
</evidence>
<feature type="chain" id="PRO_0000060796" description="Cytochrome b">
    <location>
        <begin position="1"/>
        <end position="379"/>
    </location>
</feature>
<feature type="transmembrane region" description="Helical" evidence="2">
    <location>
        <begin position="34"/>
        <end position="54"/>
    </location>
</feature>
<feature type="transmembrane region" description="Helical" evidence="2">
    <location>
        <begin position="78"/>
        <end position="99"/>
    </location>
</feature>
<feature type="transmembrane region" description="Helical" evidence="2">
    <location>
        <begin position="114"/>
        <end position="134"/>
    </location>
</feature>
<feature type="transmembrane region" description="Helical" evidence="2">
    <location>
        <begin position="179"/>
        <end position="199"/>
    </location>
</feature>
<feature type="transmembrane region" description="Helical" evidence="2">
    <location>
        <begin position="227"/>
        <end position="247"/>
    </location>
</feature>
<feature type="transmembrane region" description="Helical" evidence="2">
    <location>
        <begin position="289"/>
        <end position="309"/>
    </location>
</feature>
<feature type="transmembrane region" description="Helical" evidence="2">
    <location>
        <begin position="321"/>
        <end position="341"/>
    </location>
</feature>
<feature type="transmembrane region" description="Helical" evidence="2">
    <location>
        <begin position="348"/>
        <end position="368"/>
    </location>
</feature>
<feature type="binding site" description="axial binding residue" evidence="2">
    <location>
        <position position="84"/>
    </location>
    <ligand>
        <name>heme b</name>
        <dbReference type="ChEBI" id="CHEBI:60344"/>
        <label>b562</label>
    </ligand>
    <ligandPart>
        <name>Fe</name>
        <dbReference type="ChEBI" id="CHEBI:18248"/>
    </ligandPart>
</feature>
<feature type="binding site" description="axial binding residue" evidence="2">
    <location>
        <position position="98"/>
    </location>
    <ligand>
        <name>heme b</name>
        <dbReference type="ChEBI" id="CHEBI:60344"/>
        <label>b566</label>
    </ligand>
    <ligandPart>
        <name>Fe</name>
        <dbReference type="ChEBI" id="CHEBI:18248"/>
    </ligandPart>
</feature>
<feature type="binding site" description="axial binding residue" evidence="2">
    <location>
        <position position="183"/>
    </location>
    <ligand>
        <name>heme b</name>
        <dbReference type="ChEBI" id="CHEBI:60344"/>
        <label>b562</label>
    </ligand>
    <ligandPart>
        <name>Fe</name>
        <dbReference type="ChEBI" id="CHEBI:18248"/>
    </ligandPart>
</feature>
<feature type="binding site" description="axial binding residue" evidence="2">
    <location>
        <position position="197"/>
    </location>
    <ligand>
        <name>heme b</name>
        <dbReference type="ChEBI" id="CHEBI:60344"/>
        <label>b566</label>
    </ligand>
    <ligandPart>
        <name>Fe</name>
        <dbReference type="ChEBI" id="CHEBI:18248"/>
    </ligandPart>
</feature>
<feature type="binding site" evidence="2">
    <location>
        <position position="202"/>
    </location>
    <ligand>
        <name>a ubiquinone</name>
        <dbReference type="ChEBI" id="CHEBI:16389"/>
    </ligand>
</feature>